<gene>
    <name evidence="1" type="primary">alaS</name>
    <name type="ordered locus">Aave_3035</name>
</gene>
<accession>A1TRL4</accession>
<feature type="chain" id="PRO_0000347471" description="Alanine--tRNA ligase">
    <location>
        <begin position="1"/>
        <end position="948"/>
    </location>
</feature>
<feature type="binding site" evidence="1">
    <location>
        <position position="638"/>
    </location>
    <ligand>
        <name>Zn(2+)</name>
        <dbReference type="ChEBI" id="CHEBI:29105"/>
    </ligand>
</feature>
<feature type="binding site" evidence="1">
    <location>
        <position position="642"/>
    </location>
    <ligand>
        <name>Zn(2+)</name>
        <dbReference type="ChEBI" id="CHEBI:29105"/>
    </ligand>
</feature>
<feature type="binding site" evidence="1">
    <location>
        <position position="739"/>
    </location>
    <ligand>
        <name>Zn(2+)</name>
        <dbReference type="ChEBI" id="CHEBI:29105"/>
    </ligand>
</feature>
<feature type="binding site" evidence="1">
    <location>
        <position position="743"/>
    </location>
    <ligand>
        <name>Zn(2+)</name>
        <dbReference type="ChEBI" id="CHEBI:29105"/>
    </ligand>
</feature>
<proteinExistence type="inferred from homology"/>
<dbReference type="EC" id="6.1.1.7" evidence="1"/>
<dbReference type="EMBL" id="CP000512">
    <property type="protein sequence ID" value="ABM33602.1"/>
    <property type="molecule type" value="Genomic_DNA"/>
</dbReference>
<dbReference type="SMR" id="A1TRL4"/>
<dbReference type="STRING" id="397945.Aave_3035"/>
<dbReference type="KEGG" id="aav:Aave_3035"/>
<dbReference type="eggNOG" id="COG0013">
    <property type="taxonomic scope" value="Bacteria"/>
</dbReference>
<dbReference type="HOGENOM" id="CLU_004485_1_1_4"/>
<dbReference type="OrthoDB" id="9803884at2"/>
<dbReference type="Proteomes" id="UP000002596">
    <property type="component" value="Chromosome"/>
</dbReference>
<dbReference type="GO" id="GO:0005829">
    <property type="term" value="C:cytosol"/>
    <property type="evidence" value="ECO:0007669"/>
    <property type="project" value="TreeGrafter"/>
</dbReference>
<dbReference type="GO" id="GO:0004813">
    <property type="term" value="F:alanine-tRNA ligase activity"/>
    <property type="evidence" value="ECO:0007669"/>
    <property type="project" value="UniProtKB-UniRule"/>
</dbReference>
<dbReference type="GO" id="GO:0002161">
    <property type="term" value="F:aminoacyl-tRNA deacylase activity"/>
    <property type="evidence" value="ECO:0007669"/>
    <property type="project" value="TreeGrafter"/>
</dbReference>
<dbReference type="GO" id="GO:0005524">
    <property type="term" value="F:ATP binding"/>
    <property type="evidence" value="ECO:0007669"/>
    <property type="project" value="UniProtKB-UniRule"/>
</dbReference>
<dbReference type="GO" id="GO:0000049">
    <property type="term" value="F:tRNA binding"/>
    <property type="evidence" value="ECO:0007669"/>
    <property type="project" value="UniProtKB-KW"/>
</dbReference>
<dbReference type="GO" id="GO:0008270">
    <property type="term" value="F:zinc ion binding"/>
    <property type="evidence" value="ECO:0007669"/>
    <property type="project" value="UniProtKB-UniRule"/>
</dbReference>
<dbReference type="GO" id="GO:0006419">
    <property type="term" value="P:alanyl-tRNA aminoacylation"/>
    <property type="evidence" value="ECO:0007669"/>
    <property type="project" value="UniProtKB-UniRule"/>
</dbReference>
<dbReference type="GO" id="GO:0045892">
    <property type="term" value="P:negative regulation of DNA-templated transcription"/>
    <property type="evidence" value="ECO:0007669"/>
    <property type="project" value="TreeGrafter"/>
</dbReference>
<dbReference type="CDD" id="cd00673">
    <property type="entry name" value="AlaRS_core"/>
    <property type="match status" value="1"/>
</dbReference>
<dbReference type="FunFam" id="2.40.30.130:FF:000001">
    <property type="entry name" value="Alanine--tRNA ligase"/>
    <property type="match status" value="1"/>
</dbReference>
<dbReference type="FunFam" id="3.10.310.40:FF:000001">
    <property type="entry name" value="Alanine--tRNA ligase"/>
    <property type="match status" value="1"/>
</dbReference>
<dbReference type="FunFam" id="3.30.54.20:FF:000001">
    <property type="entry name" value="Alanine--tRNA ligase"/>
    <property type="match status" value="1"/>
</dbReference>
<dbReference type="FunFam" id="3.30.930.10:FF:000004">
    <property type="entry name" value="Alanine--tRNA ligase"/>
    <property type="match status" value="1"/>
</dbReference>
<dbReference type="FunFam" id="3.30.980.10:FF:000004">
    <property type="entry name" value="Alanine--tRNA ligase, cytoplasmic"/>
    <property type="match status" value="1"/>
</dbReference>
<dbReference type="Gene3D" id="2.40.30.130">
    <property type="match status" value="1"/>
</dbReference>
<dbReference type="Gene3D" id="3.10.310.40">
    <property type="match status" value="1"/>
</dbReference>
<dbReference type="Gene3D" id="3.30.54.20">
    <property type="match status" value="1"/>
</dbReference>
<dbReference type="Gene3D" id="6.10.250.550">
    <property type="match status" value="1"/>
</dbReference>
<dbReference type="Gene3D" id="3.30.930.10">
    <property type="entry name" value="Bira Bifunctional Protein, Domain 2"/>
    <property type="match status" value="1"/>
</dbReference>
<dbReference type="Gene3D" id="3.30.980.10">
    <property type="entry name" value="Threonyl-trna Synthetase, Chain A, domain 2"/>
    <property type="match status" value="1"/>
</dbReference>
<dbReference type="HAMAP" id="MF_00036_B">
    <property type="entry name" value="Ala_tRNA_synth_B"/>
    <property type="match status" value="1"/>
</dbReference>
<dbReference type="InterPro" id="IPR045864">
    <property type="entry name" value="aa-tRNA-synth_II/BPL/LPL"/>
</dbReference>
<dbReference type="InterPro" id="IPR002318">
    <property type="entry name" value="Ala-tRNA-lgiase_IIc"/>
</dbReference>
<dbReference type="InterPro" id="IPR018162">
    <property type="entry name" value="Ala-tRNA-ligase_IIc_anticod-bd"/>
</dbReference>
<dbReference type="InterPro" id="IPR018165">
    <property type="entry name" value="Ala-tRNA-synth_IIc_core"/>
</dbReference>
<dbReference type="InterPro" id="IPR018164">
    <property type="entry name" value="Ala-tRNA-synth_IIc_N"/>
</dbReference>
<dbReference type="InterPro" id="IPR050058">
    <property type="entry name" value="Ala-tRNA_ligase"/>
</dbReference>
<dbReference type="InterPro" id="IPR023033">
    <property type="entry name" value="Ala_tRNA_ligase_euk/bac"/>
</dbReference>
<dbReference type="InterPro" id="IPR003156">
    <property type="entry name" value="DHHA1_dom"/>
</dbReference>
<dbReference type="InterPro" id="IPR018163">
    <property type="entry name" value="Thr/Ala-tRNA-synth_IIc_edit"/>
</dbReference>
<dbReference type="InterPro" id="IPR009000">
    <property type="entry name" value="Transl_B-barrel_sf"/>
</dbReference>
<dbReference type="InterPro" id="IPR012947">
    <property type="entry name" value="tRNA_SAD"/>
</dbReference>
<dbReference type="NCBIfam" id="TIGR00344">
    <property type="entry name" value="alaS"/>
    <property type="match status" value="2"/>
</dbReference>
<dbReference type="PANTHER" id="PTHR11777:SF9">
    <property type="entry name" value="ALANINE--TRNA LIGASE, CYTOPLASMIC"/>
    <property type="match status" value="1"/>
</dbReference>
<dbReference type="PANTHER" id="PTHR11777">
    <property type="entry name" value="ALANYL-TRNA SYNTHETASE"/>
    <property type="match status" value="1"/>
</dbReference>
<dbReference type="Pfam" id="PF02272">
    <property type="entry name" value="DHHA1"/>
    <property type="match status" value="1"/>
</dbReference>
<dbReference type="Pfam" id="PF01411">
    <property type="entry name" value="tRNA-synt_2c"/>
    <property type="match status" value="2"/>
</dbReference>
<dbReference type="Pfam" id="PF07973">
    <property type="entry name" value="tRNA_SAD"/>
    <property type="match status" value="1"/>
</dbReference>
<dbReference type="PRINTS" id="PR00980">
    <property type="entry name" value="TRNASYNTHALA"/>
</dbReference>
<dbReference type="SMART" id="SM00863">
    <property type="entry name" value="tRNA_SAD"/>
    <property type="match status" value="1"/>
</dbReference>
<dbReference type="SUPFAM" id="SSF55681">
    <property type="entry name" value="Class II aaRS and biotin synthetases"/>
    <property type="match status" value="1"/>
</dbReference>
<dbReference type="SUPFAM" id="SSF101353">
    <property type="entry name" value="Putative anticodon-binding domain of alanyl-tRNA synthetase (AlaRS)"/>
    <property type="match status" value="1"/>
</dbReference>
<dbReference type="SUPFAM" id="SSF55186">
    <property type="entry name" value="ThrRS/AlaRS common domain"/>
    <property type="match status" value="1"/>
</dbReference>
<dbReference type="SUPFAM" id="SSF50447">
    <property type="entry name" value="Translation proteins"/>
    <property type="match status" value="1"/>
</dbReference>
<dbReference type="PROSITE" id="PS50860">
    <property type="entry name" value="AA_TRNA_LIGASE_II_ALA"/>
    <property type="match status" value="1"/>
</dbReference>
<sequence>MTKPTPPSSVADIRKSFLDFFASKGHTVVPSSPLVPGNDPTLMFTNSGMVQFKDVFLGTDKRPYVRATSVQACLRAGGKHNDLENVGYTARHHTFFEMLGNWSFGDYFKRDSLKWAWELLTEVYGLPKERLLATVYAEDDEAYDIWTKEIGLPPERVIRIGDNKGGRYKSDNFWMMADTGPCGPCSEIFYDHGPHIPGGPPGSPDEDGDRFIEIWNNVFMQFDMAEDGSVTPLPAPCVDTGMGLERLAAILQHVHSNYEIDLFAALIQAAARETGTADLANPSLKVIADHIRATAFLVSDGVIPSNEGRGYVQRRIVRRAIRHGYKLGRKTPFFHSLVKDLVAQMGDAYPKLREQEQRITEVLKAEEERFFETLANGMDLLDSALDIQLASKALQNKTLRWFASEGREEKLVSFKDDVQVAEAVLISDELRSTEYMQRLKETVPGLNEVKTLHSVIRDWSGLTLPGDLAFKLHDTYGFPLDLTNDVCRERGVTVDEDGFKAAMDRQKAQARAAGKFKMDKALEYGGEANRFSGYDGLTESAKIVAIYVDGTSAQALEAGQNGVVVLDNTPFYAESGGQVGDQGVIHAGGARFAVDDTLKIRADVYGHHGRLESGTLRVGDAVQAEVDAALRAATMRNHSVTHIMHKALREVLGSHVQQKGSLVNAERTRFDFAHNAPVTDAQIREIERRVNEEILANTPTGARVMDIESAQKTGAMMLFGEKYGETVRVLDIGTSRELCGGTHVARTGDIGLFKVVGESGVAAGVRRIEAVTGAGALAYLQQLEDTVAKAAGALRAPAAEITGRIGQALEQVKALEREVAALKGKLASSQGDELAGQAVDVKGLKVLAATLPGADAKTLRDTMDKLKDKLKSAAIVLAAVDGAKVQIAAGVTPDAMAKVKAGELVNFVASQVGGKGGGKPDMAMAGGTDAAALPAALASVAAWVGERA</sequence>
<comment type="function">
    <text evidence="1">Catalyzes the attachment of alanine to tRNA(Ala) in a two-step reaction: alanine is first activated by ATP to form Ala-AMP and then transferred to the acceptor end of tRNA(Ala). Also edits incorrectly charged Ser-tRNA(Ala) and Gly-tRNA(Ala) via its editing domain.</text>
</comment>
<comment type="catalytic activity">
    <reaction evidence="1">
        <text>tRNA(Ala) + L-alanine + ATP = L-alanyl-tRNA(Ala) + AMP + diphosphate</text>
        <dbReference type="Rhea" id="RHEA:12540"/>
        <dbReference type="Rhea" id="RHEA-COMP:9657"/>
        <dbReference type="Rhea" id="RHEA-COMP:9923"/>
        <dbReference type="ChEBI" id="CHEBI:30616"/>
        <dbReference type="ChEBI" id="CHEBI:33019"/>
        <dbReference type="ChEBI" id="CHEBI:57972"/>
        <dbReference type="ChEBI" id="CHEBI:78442"/>
        <dbReference type="ChEBI" id="CHEBI:78497"/>
        <dbReference type="ChEBI" id="CHEBI:456215"/>
        <dbReference type="EC" id="6.1.1.7"/>
    </reaction>
</comment>
<comment type="cofactor">
    <cofactor evidence="1">
        <name>Zn(2+)</name>
        <dbReference type="ChEBI" id="CHEBI:29105"/>
    </cofactor>
    <text evidence="1">Binds 1 zinc ion per subunit.</text>
</comment>
<comment type="subcellular location">
    <subcellularLocation>
        <location evidence="1">Cytoplasm</location>
    </subcellularLocation>
</comment>
<comment type="domain">
    <text evidence="1">Consists of three domains; the N-terminal catalytic domain, the editing domain and the C-terminal C-Ala domain. The editing domain removes incorrectly charged amino acids, while the C-Ala domain, along with tRNA(Ala), serves as a bridge to cooperatively bring together the editing and aminoacylation centers thus stimulating deacylation of misacylated tRNAs.</text>
</comment>
<comment type="similarity">
    <text evidence="1">Belongs to the class-II aminoacyl-tRNA synthetase family.</text>
</comment>
<reference key="1">
    <citation type="submission" date="2006-12" db="EMBL/GenBank/DDBJ databases">
        <title>Complete sequence of Acidovorax avenae subsp. citrulli AAC00-1.</title>
        <authorList>
            <person name="Copeland A."/>
            <person name="Lucas S."/>
            <person name="Lapidus A."/>
            <person name="Barry K."/>
            <person name="Detter J.C."/>
            <person name="Glavina del Rio T."/>
            <person name="Dalin E."/>
            <person name="Tice H."/>
            <person name="Pitluck S."/>
            <person name="Kiss H."/>
            <person name="Brettin T."/>
            <person name="Bruce D."/>
            <person name="Han C."/>
            <person name="Tapia R."/>
            <person name="Gilna P."/>
            <person name="Schmutz J."/>
            <person name="Larimer F."/>
            <person name="Land M."/>
            <person name="Hauser L."/>
            <person name="Kyrpides N."/>
            <person name="Kim E."/>
            <person name="Stahl D."/>
            <person name="Richardson P."/>
        </authorList>
    </citation>
    <scope>NUCLEOTIDE SEQUENCE [LARGE SCALE GENOMIC DNA]</scope>
    <source>
        <strain>AAC00-1</strain>
    </source>
</reference>
<organism>
    <name type="scientific">Paracidovorax citrulli (strain AAC00-1)</name>
    <name type="common">Acidovorax citrulli</name>
    <dbReference type="NCBI Taxonomy" id="397945"/>
    <lineage>
        <taxon>Bacteria</taxon>
        <taxon>Pseudomonadati</taxon>
        <taxon>Pseudomonadota</taxon>
        <taxon>Betaproteobacteria</taxon>
        <taxon>Burkholderiales</taxon>
        <taxon>Comamonadaceae</taxon>
        <taxon>Paracidovorax</taxon>
    </lineage>
</organism>
<name>SYA_PARC0</name>
<evidence type="ECO:0000255" key="1">
    <source>
        <dbReference type="HAMAP-Rule" id="MF_00036"/>
    </source>
</evidence>
<keyword id="KW-0030">Aminoacyl-tRNA synthetase</keyword>
<keyword id="KW-0067">ATP-binding</keyword>
<keyword id="KW-0963">Cytoplasm</keyword>
<keyword id="KW-0436">Ligase</keyword>
<keyword id="KW-0479">Metal-binding</keyword>
<keyword id="KW-0547">Nucleotide-binding</keyword>
<keyword id="KW-0648">Protein biosynthesis</keyword>
<keyword id="KW-0694">RNA-binding</keyword>
<keyword id="KW-0820">tRNA-binding</keyword>
<keyword id="KW-0862">Zinc</keyword>
<protein>
    <recommendedName>
        <fullName evidence="1">Alanine--tRNA ligase</fullName>
        <ecNumber evidence="1">6.1.1.7</ecNumber>
    </recommendedName>
    <alternativeName>
        <fullName evidence="1">Alanyl-tRNA synthetase</fullName>
        <shortName evidence="1">AlaRS</shortName>
    </alternativeName>
</protein>